<reference key="1">
    <citation type="journal article" date="1999" name="Mol. Phylogenet. Evol.">
        <title>Systematic relationships within the dasyurid marsupial tribe Sminthopsini -- a multigene approach.</title>
        <authorList>
            <person name="Blacket M.J."/>
            <person name="Krajewski C."/>
            <person name="Labrinidis A."/>
            <person name="Cambron B."/>
            <person name="Cooper S."/>
            <person name="Westerman M."/>
        </authorList>
    </citation>
    <scope>NUCLEOTIDE SEQUENCE [GENOMIC DNA]</scope>
</reference>
<organism>
    <name type="scientific">Sminthopsis youngsoni</name>
    <name type="common">Lesser hairy-footed dunnart</name>
    <dbReference type="NCBI Taxonomy" id="90770"/>
    <lineage>
        <taxon>Eukaryota</taxon>
        <taxon>Metazoa</taxon>
        <taxon>Chordata</taxon>
        <taxon>Craniata</taxon>
        <taxon>Vertebrata</taxon>
        <taxon>Euteleostomi</taxon>
        <taxon>Mammalia</taxon>
        <taxon>Metatheria</taxon>
        <taxon>Dasyuromorphia</taxon>
        <taxon>Dasyuridae</taxon>
        <taxon>Sminthopsis</taxon>
    </lineage>
</organism>
<name>HSP1_SMIYO</name>
<protein>
    <recommendedName>
        <fullName>Sperm protamine P1</fullName>
    </recommendedName>
</protein>
<keyword id="KW-0158">Chromosome</keyword>
<keyword id="KW-0217">Developmental protein</keyword>
<keyword id="KW-0221">Differentiation</keyword>
<keyword id="KW-0226">DNA condensation</keyword>
<keyword id="KW-0238">DNA-binding</keyword>
<keyword id="KW-0544">Nucleosome core</keyword>
<keyword id="KW-0539">Nucleus</keyword>
<keyword id="KW-0744">Spermatogenesis</keyword>
<sequence length="63" mass="8697">MARYRRHSRSRSRSRYRRRRRRRSRHHNRRRTYRRSRRHSRRRRGRRRGYSRRRYSRRGRRRY</sequence>
<comment type="function">
    <text evidence="1">Protamines substitute for histones in the chromatin of sperm during the haploid phase of spermatogenesis. They compact sperm DNA into a highly condensed, stable and inactive complex (By similarity).</text>
</comment>
<comment type="subcellular location">
    <subcellularLocation>
        <location evidence="1">Nucleus</location>
    </subcellularLocation>
    <subcellularLocation>
        <location evidence="1">Chromosome</location>
    </subcellularLocation>
</comment>
<comment type="tissue specificity">
    <text>Testis.</text>
</comment>
<comment type="similarity">
    <text evidence="3">Belongs to the protamine P1 family.</text>
</comment>
<dbReference type="EMBL" id="AF089885">
    <property type="protein sequence ID" value="AAD55344.1"/>
    <property type="molecule type" value="Genomic_DNA"/>
</dbReference>
<dbReference type="GO" id="GO:0000786">
    <property type="term" value="C:nucleosome"/>
    <property type="evidence" value="ECO:0007669"/>
    <property type="project" value="UniProtKB-KW"/>
</dbReference>
<dbReference type="GO" id="GO:0005634">
    <property type="term" value="C:nucleus"/>
    <property type="evidence" value="ECO:0007669"/>
    <property type="project" value="UniProtKB-SubCell"/>
</dbReference>
<dbReference type="GO" id="GO:0003677">
    <property type="term" value="F:DNA binding"/>
    <property type="evidence" value="ECO:0007669"/>
    <property type="project" value="UniProtKB-KW"/>
</dbReference>
<dbReference type="GO" id="GO:0030261">
    <property type="term" value="P:chromosome condensation"/>
    <property type="evidence" value="ECO:0007669"/>
    <property type="project" value="UniProtKB-KW"/>
</dbReference>
<dbReference type="GO" id="GO:0035092">
    <property type="term" value="P:sperm DNA condensation"/>
    <property type="evidence" value="ECO:0007669"/>
    <property type="project" value="InterPro"/>
</dbReference>
<dbReference type="InterPro" id="IPR000221">
    <property type="entry name" value="Protamine_P1"/>
</dbReference>
<dbReference type="PROSITE" id="PS00048">
    <property type="entry name" value="PROTAMINE_P1"/>
    <property type="match status" value="1"/>
</dbReference>
<accession>Q71UF8</accession>
<proteinExistence type="evidence at transcript level"/>
<gene>
    <name type="primary">PRM1</name>
</gene>
<evidence type="ECO:0000250" key="1"/>
<evidence type="ECO:0000256" key="2">
    <source>
        <dbReference type="SAM" id="MobiDB-lite"/>
    </source>
</evidence>
<evidence type="ECO:0000305" key="3"/>
<feature type="chain" id="PRO_0000191575" description="Sperm protamine P1">
    <location>
        <begin position="1"/>
        <end position="63"/>
    </location>
</feature>
<feature type="region of interest" description="Disordered" evidence="2">
    <location>
        <begin position="1"/>
        <end position="63"/>
    </location>
</feature>